<organism>
    <name type="scientific">Streptococcus pyogenes serotype M3 (strain SSI-1)</name>
    <dbReference type="NCBI Taxonomy" id="193567"/>
    <lineage>
        <taxon>Bacteria</taxon>
        <taxon>Bacillati</taxon>
        <taxon>Bacillota</taxon>
        <taxon>Bacilli</taxon>
        <taxon>Lactobacillales</taxon>
        <taxon>Streptococcaceae</taxon>
        <taxon>Streptococcus</taxon>
    </lineage>
</organism>
<proteinExistence type="inferred from homology"/>
<sequence length="85" mass="9801">MDPKKIARINELAKKKKTVGLTGPEKVEQAKLREEYIEGYRRSVRHHIEGIKLVDEEGNDVTPEKLRQVQREKGLHGRSLDDPKS</sequence>
<dbReference type="EMBL" id="BA000034">
    <property type="protein sequence ID" value="BAC63491.1"/>
    <property type="molecule type" value="Genomic_DNA"/>
</dbReference>
<dbReference type="RefSeq" id="WP_002983550.1">
    <property type="nucleotide sequence ID" value="NC_004606.1"/>
</dbReference>
<dbReference type="SMR" id="P0DG99"/>
<dbReference type="KEGG" id="sps:SPs0396"/>
<dbReference type="HOGENOM" id="CLU_173137_0_2_9"/>
<dbReference type="GO" id="GO:0005737">
    <property type="term" value="C:cytoplasm"/>
    <property type="evidence" value="ECO:0007669"/>
    <property type="project" value="UniProtKB-SubCell"/>
</dbReference>
<dbReference type="Gene3D" id="1.10.287.540">
    <property type="entry name" value="Helix hairpin bin"/>
    <property type="match status" value="1"/>
</dbReference>
<dbReference type="HAMAP" id="MF_01103">
    <property type="entry name" value="UPF0291"/>
    <property type="match status" value="1"/>
</dbReference>
<dbReference type="InterPro" id="IPR009242">
    <property type="entry name" value="DUF896"/>
</dbReference>
<dbReference type="NCBIfam" id="NF002711">
    <property type="entry name" value="PRK02539.1"/>
    <property type="match status" value="1"/>
</dbReference>
<dbReference type="PANTHER" id="PTHR37300">
    <property type="entry name" value="UPF0291 PROTEIN CBO2609/CLC_2481"/>
    <property type="match status" value="1"/>
</dbReference>
<dbReference type="PANTHER" id="PTHR37300:SF1">
    <property type="entry name" value="UPF0291 PROTEIN YNZC"/>
    <property type="match status" value="1"/>
</dbReference>
<dbReference type="Pfam" id="PF05979">
    <property type="entry name" value="DUF896"/>
    <property type="match status" value="1"/>
</dbReference>
<dbReference type="SUPFAM" id="SSF158221">
    <property type="entry name" value="YnzC-like"/>
    <property type="match status" value="1"/>
</dbReference>
<keyword id="KW-0963">Cytoplasm</keyword>
<protein>
    <recommendedName>
        <fullName evidence="1">UPF0291 protein SPs0396</fullName>
    </recommendedName>
</protein>
<reference key="1">
    <citation type="journal article" date="2003" name="Genome Res.">
        <title>Genome sequence of an M3 strain of Streptococcus pyogenes reveals a large-scale genomic rearrangement in invasive strains and new insights into phage evolution.</title>
        <authorList>
            <person name="Nakagawa I."/>
            <person name="Kurokawa K."/>
            <person name="Yamashita A."/>
            <person name="Nakata M."/>
            <person name="Tomiyasu Y."/>
            <person name="Okahashi N."/>
            <person name="Kawabata S."/>
            <person name="Yamazaki K."/>
            <person name="Shiba T."/>
            <person name="Yasunaga T."/>
            <person name="Hayashi H."/>
            <person name="Hattori M."/>
            <person name="Hamada S."/>
        </authorList>
    </citation>
    <scope>NUCLEOTIDE SEQUENCE [LARGE SCALE GENOMIC DNA]</scope>
    <source>
        <strain>SSI-1</strain>
    </source>
</reference>
<comment type="subcellular location">
    <subcellularLocation>
        <location evidence="1">Cytoplasm</location>
    </subcellularLocation>
</comment>
<comment type="similarity">
    <text evidence="1">Belongs to the UPF0291 family.</text>
</comment>
<accession>P0DG99</accession>
<accession>P60081</accession>
<accession>Q99YI5</accession>
<feature type="chain" id="PRO_0000411639" description="UPF0291 protein SPs0396">
    <location>
        <begin position="1"/>
        <end position="85"/>
    </location>
</feature>
<feature type="region of interest" description="Disordered" evidence="2">
    <location>
        <begin position="62"/>
        <end position="85"/>
    </location>
</feature>
<evidence type="ECO:0000255" key="1">
    <source>
        <dbReference type="HAMAP-Rule" id="MF_01103"/>
    </source>
</evidence>
<evidence type="ECO:0000256" key="2">
    <source>
        <dbReference type="SAM" id="MobiDB-lite"/>
    </source>
</evidence>
<gene>
    <name type="ordered locus">SPs0396</name>
</gene>
<name>Y1470_STRPQ</name>